<sequence length="86" mass="9963">MAEENKTNRDDLTFEEAMKGLEQIVSKLEEGDVPLEKAIDYFQEGMALSKICHEKLQNVEKQMDFILRENGELAPFSVREEEKGDR</sequence>
<keyword id="KW-0963">Cytoplasm</keyword>
<keyword id="KW-0269">Exonuclease</keyword>
<keyword id="KW-0378">Hydrolase</keyword>
<keyword id="KW-0540">Nuclease</keyword>
<keyword id="KW-1185">Reference proteome</keyword>
<name>EX7S_BACLD</name>
<proteinExistence type="inferred from homology"/>
<dbReference type="EC" id="3.1.11.6" evidence="1"/>
<dbReference type="EMBL" id="AE017333">
    <property type="protein sequence ID" value="AAU41474.1"/>
    <property type="molecule type" value="Genomic_DNA"/>
</dbReference>
<dbReference type="EMBL" id="CP000002">
    <property type="protein sequence ID" value="AAU24115.1"/>
    <property type="molecule type" value="Genomic_DNA"/>
</dbReference>
<dbReference type="RefSeq" id="WP_011198110.1">
    <property type="nucleotide sequence ID" value="NC_006322.1"/>
</dbReference>
<dbReference type="SMR" id="Q65HJ0"/>
<dbReference type="STRING" id="279010.BL01525"/>
<dbReference type="KEGG" id="bld:BLi02600"/>
<dbReference type="KEGG" id="bli:BL01525"/>
<dbReference type="PATRIC" id="fig|279010.13.peg.2639"/>
<dbReference type="eggNOG" id="COG1722">
    <property type="taxonomic scope" value="Bacteria"/>
</dbReference>
<dbReference type="HOGENOM" id="CLU_145918_3_1_9"/>
<dbReference type="Proteomes" id="UP000000606">
    <property type="component" value="Chromosome"/>
</dbReference>
<dbReference type="GO" id="GO:0005829">
    <property type="term" value="C:cytosol"/>
    <property type="evidence" value="ECO:0007669"/>
    <property type="project" value="TreeGrafter"/>
</dbReference>
<dbReference type="GO" id="GO:0009318">
    <property type="term" value="C:exodeoxyribonuclease VII complex"/>
    <property type="evidence" value="ECO:0007669"/>
    <property type="project" value="InterPro"/>
</dbReference>
<dbReference type="GO" id="GO:0008855">
    <property type="term" value="F:exodeoxyribonuclease VII activity"/>
    <property type="evidence" value="ECO:0007669"/>
    <property type="project" value="UniProtKB-UniRule"/>
</dbReference>
<dbReference type="GO" id="GO:0006308">
    <property type="term" value="P:DNA catabolic process"/>
    <property type="evidence" value="ECO:0007669"/>
    <property type="project" value="UniProtKB-UniRule"/>
</dbReference>
<dbReference type="Gene3D" id="1.10.287.1040">
    <property type="entry name" value="Exonuclease VII, small subunit"/>
    <property type="match status" value="1"/>
</dbReference>
<dbReference type="HAMAP" id="MF_00337">
    <property type="entry name" value="Exonuc_7_S"/>
    <property type="match status" value="1"/>
</dbReference>
<dbReference type="InterPro" id="IPR003761">
    <property type="entry name" value="Exonuc_VII_S"/>
</dbReference>
<dbReference type="InterPro" id="IPR037004">
    <property type="entry name" value="Exonuc_VII_ssu_sf"/>
</dbReference>
<dbReference type="NCBIfam" id="NF010666">
    <property type="entry name" value="PRK14063.1"/>
    <property type="match status" value="1"/>
</dbReference>
<dbReference type="NCBIfam" id="TIGR01280">
    <property type="entry name" value="xseB"/>
    <property type="match status" value="1"/>
</dbReference>
<dbReference type="PANTHER" id="PTHR34137">
    <property type="entry name" value="EXODEOXYRIBONUCLEASE 7 SMALL SUBUNIT"/>
    <property type="match status" value="1"/>
</dbReference>
<dbReference type="PANTHER" id="PTHR34137:SF1">
    <property type="entry name" value="EXODEOXYRIBONUCLEASE 7 SMALL SUBUNIT"/>
    <property type="match status" value="1"/>
</dbReference>
<dbReference type="Pfam" id="PF02609">
    <property type="entry name" value="Exonuc_VII_S"/>
    <property type="match status" value="1"/>
</dbReference>
<dbReference type="SUPFAM" id="SSF116842">
    <property type="entry name" value="XseB-like"/>
    <property type="match status" value="1"/>
</dbReference>
<organism>
    <name type="scientific">Bacillus licheniformis (strain ATCC 14580 / DSM 13 / JCM 2505 / CCUG 7422 / NBRC 12200 / NCIMB 9375 / NCTC 10341 / NRRL NRS-1264 / Gibson 46)</name>
    <dbReference type="NCBI Taxonomy" id="279010"/>
    <lineage>
        <taxon>Bacteria</taxon>
        <taxon>Bacillati</taxon>
        <taxon>Bacillota</taxon>
        <taxon>Bacilli</taxon>
        <taxon>Bacillales</taxon>
        <taxon>Bacillaceae</taxon>
        <taxon>Bacillus</taxon>
    </lineage>
</organism>
<comment type="function">
    <text evidence="1">Bidirectionally degrades single-stranded DNA into large acid-insoluble oligonucleotides, which are then degraded further into small acid-soluble oligonucleotides.</text>
</comment>
<comment type="catalytic activity">
    <reaction evidence="1">
        <text>Exonucleolytic cleavage in either 5'- to 3'- or 3'- to 5'-direction to yield nucleoside 5'-phosphates.</text>
        <dbReference type="EC" id="3.1.11.6"/>
    </reaction>
</comment>
<comment type="subunit">
    <text evidence="1">Heterooligomer composed of large and small subunits.</text>
</comment>
<comment type="subcellular location">
    <subcellularLocation>
        <location evidence="1">Cytoplasm</location>
    </subcellularLocation>
</comment>
<comment type="similarity">
    <text evidence="1">Belongs to the XseB family.</text>
</comment>
<evidence type="ECO:0000255" key="1">
    <source>
        <dbReference type="HAMAP-Rule" id="MF_00337"/>
    </source>
</evidence>
<protein>
    <recommendedName>
        <fullName evidence="1">Exodeoxyribonuclease 7 small subunit</fullName>
        <ecNumber evidence="1">3.1.11.6</ecNumber>
    </recommendedName>
    <alternativeName>
        <fullName evidence="1">Exodeoxyribonuclease VII small subunit</fullName>
        <shortName evidence="1">Exonuclease VII small subunit</shortName>
    </alternativeName>
</protein>
<accession>Q65HJ0</accession>
<accession>Q62SZ4</accession>
<reference key="1">
    <citation type="journal article" date="2004" name="J. Mol. Microbiol. Biotechnol.">
        <title>The complete genome sequence of Bacillus licheniformis DSM13, an organism with great industrial potential.</title>
        <authorList>
            <person name="Veith B."/>
            <person name="Herzberg C."/>
            <person name="Steckel S."/>
            <person name="Feesche J."/>
            <person name="Maurer K.H."/>
            <person name="Ehrenreich P."/>
            <person name="Baeumer S."/>
            <person name="Henne A."/>
            <person name="Liesegang H."/>
            <person name="Merkl R."/>
            <person name="Ehrenreich A."/>
            <person name="Gottschalk G."/>
        </authorList>
    </citation>
    <scope>NUCLEOTIDE SEQUENCE [LARGE SCALE GENOMIC DNA]</scope>
    <source>
        <strain>ATCC 14580 / DSM 13 / JCM 2505 / CCUG 7422 / NBRC 12200 / NCIMB 9375 / NCTC 10341 / NRRL NRS-1264 / Gibson 46</strain>
    </source>
</reference>
<reference key="2">
    <citation type="journal article" date="2004" name="Genome Biol.">
        <title>Complete genome sequence of the industrial bacterium Bacillus licheniformis and comparisons with closely related Bacillus species.</title>
        <authorList>
            <person name="Rey M.W."/>
            <person name="Ramaiya P."/>
            <person name="Nelson B.A."/>
            <person name="Brody-Karpin S.D."/>
            <person name="Zaretsky E.J."/>
            <person name="Tang M."/>
            <person name="Lopez de Leon A."/>
            <person name="Xiang H."/>
            <person name="Gusti V."/>
            <person name="Clausen I.G."/>
            <person name="Olsen P.B."/>
            <person name="Rasmussen M.D."/>
            <person name="Andersen J.T."/>
            <person name="Joergensen P.L."/>
            <person name="Larsen T.S."/>
            <person name="Sorokin A."/>
            <person name="Bolotin A."/>
            <person name="Lapidus A."/>
            <person name="Galleron N."/>
            <person name="Ehrlich S.D."/>
            <person name="Berka R.M."/>
        </authorList>
    </citation>
    <scope>NUCLEOTIDE SEQUENCE [LARGE SCALE GENOMIC DNA]</scope>
    <source>
        <strain>ATCC 14580 / DSM 13 / JCM 2505 / CCUG 7422 / NBRC 12200 / NCIMB 9375 / NCTC 10341 / NRRL NRS-1264 / Gibson 46</strain>
    </source>
</reference>
<feature type="chain" id="PRO_0000206919" description="Exodeoxyribonuclease 7 small subunit">
    <location>
        <begin position="1"/>
        <end position="86"/>
    </location>
</feature>
<gene>
    <name evidence="1" type="primary">xseB</name>
    <name type="ordered locus">BLi02600</name>
    <name type="ordered locus">BL01525</name>
</gene>